<feature type="chain" id="PRO_0000161265" description="Fumarate hydratase class II">
    <location>
        <begin position="1"/>
        <end position="463"/>
    </location>
</feature>
<feature type="active site" description="Proton donor/acceptor" evidence="1">
    <location>
        <position position="188"/>
    </location>
</feature>
<feature type="active site" evidence="1">
    <location>
        <position position="318"/>
    </location>
</feature>
<feature type="binding site" evidence="1">
    <location>
        <begin position="98"/>
        <end position="100"/>
    </location>
    <ligand>
        <name>substrate</name>
    </ligand>
</feature>
<feature type="binding site" description="in site B" evidence="1">
    <location>
        <begin position="129"/>
        <end position="132"/>
    </location>
    <ligand>
        <name>substrate</name>
    </ligand>
</feature>
<feature type="binding site" evidence="1">
    <location>
        <begin position="139"/>
        <end position="141"/>
    </location>
    <ligand>
        <name>substrate</name>
    </ligand>
</feature>
<feature type="binding site" evidence="1">
    <location>
        <position position="187"/>
    </location>
    <ligand>
        <name>substrate</name>
    </ligand>
</feature>
<feature type="binding site" evidence="1">
    <location>
        <position position="319"/>
    </location>
    <ligand>
        <name>substrate</name>
    </ligand>
</feature>
<feature type="binding site" evidence="1">
    <location>
        <begin position="324"/>
        <end position="326"/>
    </location>
    <ligand>
        <name>substrate</name>
    </ligand>
</feature>
<feature type="site" description="Important for catalytic activity" evidence="1">
    <location>
        <position position="331"/>
    </location>
</feature>
<organism>
    <name type="scientific">Caulobacter vibrioides (strain ATCC 19089 / CIP 103742 / CB 15)</name>
    <name type="common">Caulobacter crescentus</name>
    <dbReference type="NCBI Taxonomy" id="190650"/>
    <lineage>
        <taxon>Bacteria</taxon>
        <taxon>Pseudomonadati</taxon>
        <taxon>Pseudomonadota</taxon>
        <taxon>Alphaproteobacteria</taxon>
        <taxon>Caulobacterales</taxon>
        <taxon>Caulobacteraceae</taxon>
        <taxon>Caulobacter</taxon>
    </lineage>
</organism>
<dbReference type="EC" id="4.2.1.2" evidence="1"/>
<dbReference type="EMBL" id="AE005673">
    <property type="protein sequence ID" value="AAK24080.1"/>
    <property type="molecule type" value="Genomic_DNA"/>
</dbReference>
<dbReference type="PIR" id="D87510">
    <property type="entry name" value="D87510"/>
</dbReference>
<dbReference type="RefSeq" id="NP_420912.1">
    <property type="nucleotide sequence ID" value="NC_002696.2"/>
</dbReference>
<dbReference type="RefSeq" id="WP_010919970.1">
    <property type="nucleotide sequence ID" value="NC_002696.2"/>
</dbReference>
<dbReference type="SMR" id="Q9A6I5"/>
<dbReference type="STRING" id="190650.CC_2109"/>
<dbReference type="EnsemblBacteria" id="AAK24080">
    <property type="protein sequence ID" value="AAK24080"/>
    <property type="gene ID" value="CC_2109"/>
</dbReference>
<dbReference type="KEGG" id="ccr:CC_2109"/>
<dbReference type="PATRIC" id="fig|190650.5.peg.2130"/>
<dbReference type="eggNOG" id="COG0114">
    <property type="taxonomic scope" value="Bacteria"/>
</dbReference>
<dbReference type="HOGENOM" id="CLU_021594_4_1_5"/>
<dbReference type="BioCyc" id="CAULO:CC2109-MONOMER"/>
<dbReference type="UniPathway" id="UPA00223">
    <property type="reaction ID" value="UER01007"/>
</dbReference>
<dbReference type="Proteomes" id="UP000001816">
    <property type="component" value="Chromosome"/>
</dbReference>
<dbReference type="GO" id="GO:0005737">
    <property type="term" value="C:cytoplasm"/>
    <property type="evidence" value="ECO:0007669"/>
    <property type="project" value="UniProtKB-SubCell"/>
</dbReference>
<dbReference type="GO" id="GO:0004333">
    <property type="term" value="F:fumarate hydratase activity"/>
    <property type="evidence" value="ECO:0007669"/>
    <property type="project" value="UniProtKB-UniRule"/>
</dbReference>
<dbReference type="GO" id="GO:0006106">
    <property type="term" value="P:fumarate metabolic process"/>
    <property type="evidence" value="ECO:0007669"/>
    <property type="project" value="InterPro"/>
</dbReference>
<dbReference type="GO" id="GO:0006108">
    <property type="term" value="P:malate metabolic process"/>
    <property type="evidence" value="ECO:0007669"/>
    <property type="project" value="TreeGrafter"/>
</dbReference>
<dbReference type="GO" id="GO:0006099">
    <property type="term" value="P:tricarboxylic acid cycle"/>
    <property type="evidence" value="ECO:0007669"/>
    <property type="project" value="UniProtKB-UniRule"/>
</dbReference>
<dbReference type="CDD" id="cd01362">
    <property type="entry name" value="Fumarase_classII"/>
    <property type="match status" value="1"/>
</dbReference>
<dbReference type="FunFam" id="1.10.40.30:FF:000002">
    <property type="entry name" value="Fumarate hydratase class II"/>
    <property type="match status" value="1"/>
</dbReference>
<dbReference type="FunFam" id="1.10.275.10:FF:000001">
    <property type="entry name" value="Fumarate hydratase, mitochondrial"/>
    <property type="match status" value="1"/>
</dbReference>
<dbReference type="FunFam" id="1.20.200.10:FF:000001">
    <property type="entry name" value="Fumarate hydratase, mitochondrial"/>
    <property type="match status" value="1"/>
</dbReference>
<dbReference type="Gene3D" id="1.10.40.30">
    <property type="entry name" value="Fumarase/aspartase (C-terminal domain)"/>
    <property type="match status" value="1"/>
</dbReference>
<dbReference type="Gene3D" id="1.20.200.10">
    <property type="entry name" value="Fumarase/aspartase (Central domain)"/>
    <property type="match status" value="1"/>
</dbReference>
<dbReference type="Gene3D" id="1.10.275.10">
    <property type="entry name" value="Fumarase/aspartase (N-terminal domain)"/>
    <property type="match status" value="1"/>
</dbReference>
<dbReference type="HAMAP" id="MF_00743">
    <property type="entry name" value="FumaraseC"/>
    <property type="match status" value="1"/>
</dbReference>
<dbReference type="InterPro" id="IPR005677">
    <property type="entry name" value="Fum_hydII"/>
</dbReference>
<dbReference type="InterPro" id="IPR024083">
    <property type="entry name" value="Fumarase/histidase_N"/>
</dbReference>
<dbReference type="InterPro" id="IPR018951">
    <property type="entry name" value="Fumarase_C_C"/>
</dbReference>
<dbReference type="InterPro" id="IPR020557">
    <property type="entry name" value="Fumarate_lyase_CS"/>
</dbReference>
<dbReference type="InterPro" id="IPR000362">
    <property type="entry name" value="Fumarate_lyase_fam"/>
</dbReference>
<dbReference type="InterPro" id="IPR022761">
    <property type="entry name" value="Fumarate_lyase_N"/>
</dbReference>
<dbReference type="InterPro" id="IPR008948">
    <property type="entry name" value="L-Aspartase-like"/>
</dbReference>
<dbReference type="NCBIfam" id="TIGR00979">
    <property type="entry name" value="fumC_II"/>
    <property type="match status" value="1"/>
</dbReference>
<dbReference type="NCBIfam" id="NF008909">
    <property type="entry name" value="PRK12273.1"/>
    <property type="match status" value="1"/>
</dbReference>
<dbReference type="PANTHER" id="PTHR11444">
    <property type="entry name" value="ASPARTATEAMMONIA/ARGININOSUCCINATE/ADENYLOSUCCINATE LYASE"/>
    <property type="match status" value="1"/>
</dbReference>
<dbReference type="PANTHER" id="PTHR11444:SF1">
    <property type="entry name" value="FUMARATE HYDRATASE, MITOCHONDRIAL"/>
    <property type="match status" value="1"/>
</dbReference>
<dbReference type="Pfam" id="PF10415">
    <property type="entry name" value="FumaraseC_C"/>
    <property type="match status" value="1"/>
</dbReference>
<dbReference type="Pfam" id="PF00206">
    <property type="entry name" value="Lyase_1"/>
    <property type="match status" value="1"/>
</dbReference>
<dbReference type="PRINTS" id="PR00145">
    <property type="entry name" value="ARGSUCLYASE"/>
</dbReference>
<dbReference type="PRINTS" id="PR00149">
    <property type="entry name" value="FUMRATELYASE"/>
</dbReference>
<dbReference type="SUPFAM" id="SSF48557">
    <property type="entry name" value="L-aspartase-like"/>
    <property type="match status" value="1"/>
</dbReference>
<dbReference type="PROSITE" id="PS00163">
    <property type="entry name" value="FUMARATE_LYASES"/>
    <property type="match status" value="1"/>
</dbReference>
<name>FUMC_CAUVC</name>
<accession>Q9A6I5</accession>
<keyword id="KW-0963">Cytoplasm</keyword>
<keyword id="KW-0456">Lyase</keyword>
<keyword id="KW-1185">Reference proteome</keyword>
<keyword id="KW-0816">Tricarboxylic acid cycle</keyword>
<sequence>MTATRIETDTFGPIEVAADRYWGAQAQRSLGNFKIGWEKQPLPVVRALGIVKRAAAEANLALGKLDPKIAETIIAAANEVIEGKLNDHFPLVVWQTGSGTQSNMNANEVISNRAIEMLGGEMGSKKPVHPNDHVNMSQSSNDTFPTAMHIACAEQVVHDLLPALKHLHKALAAKAAEWKDIIKIGRTHTQDATPLTLGQEFGGYAQQIENGIARIEMTLPMLMQLAQGGTAVGTGLNAPVGFAELVAEQIAGITGLGFTTAPNKFEALAAHDAMVFTHGAINTVAASLFKIANDIRFLGSGPRAGLGELSLPENEPGSSIMPGKVNPTQSEALTQVCAQVFGNHSTLTFAGSQGHFELNVFNPVMAYNFLQSVRLVADAAISFTDNCVVGIEPRVDNIKKGVENSLMLVTALNGKLGYDACAKIAKTAHKNGTTLREEAVGGGYLTNEEFEQYVRPEKMISPG</sequence>
<gene>
    <name evidence="1" type="primary">fumC</name>
    <name type="ordered locus">CC_2109</name>
</gene>
<protein>
    <recommendedName>
        <fullName evidence="1">Fumarate hydratase class II</fullName>
        <shortName evidence="1">Fumarase C</shortName>
        <ecNumber evidence="1">4.2.1.2</ecNumber>
    </recommendedName>
    <alternativeName>
        <fullName evidence="1">Aerobic fumarase</fullName>
    </alternativeName>
    <alternativeName>
        <fullName evidence="1">Iron-independent fumarase</fullName>
    </alternativeName>
</protein>
<reference key="1">
    <citation type="journal article" date="2001" name="Proc. Natl. Acad. Sci. U.S.A.">
        <title>Complete genome sequence of Caulobacter crescentus.</title>
        <authorList>
            <person name="Nierman W.C."/>
            <person name="Feldblyum T.V."/>
            <person name="Laub M.T."/>
            <person name="Paulsen I.T."/>
            <person name="Nelson K.E."/>
            <person name="Eisen J.A."/>
            <person name="Heidelberg J.F."/>
            <person name="Alley M.R.K."/>
            <person name="Ohta N."/>
            <person name="Maddock J.R."/>
            <person name="Potocka I."/>
            <person name="Nelson W.C."/>
            <person name="Newton A."/>
            <person name="Stephens C."/>
            <person name="Phadke N.D."/>
            <person name="Ely B."/>
            <person name="DeBoy R.T."/>
            <person name="Dodson R.J."/>
            <person name="Durkin A.S."/>
            <person name="Gwinn M.L."/>
            <person name="Haft D.H."/>
            <person name="Kolonay J.F."/>
            <person name="Smit J."/>
            <person name="Craven M.B."/>
            <person name="Khouri H.M."/>
            <person name="Shetty J."/>
            <person name="Berry K.J."/>
            <person name="Utterback T.R."/>
            <person name="Tran K."/>
            <person name="Wolf A.M."/>
            <person name="Vamathevan J.J."/>
            <person name="Ermolaeva M.D."/>
            <person name="White O."/>
            <person name="Salzberg S.L."/>
            <person name="Venter J.C."/>
            <person name="Shapiro L."/>
            <person name="Fraser C.M."/>
        </authorList>
    </citation>
    <scope>NUCLEOTIDE SEQUENCE [LARGE SCALE GENOMIC DNA]</scope>
    <source>
        <strain>ATCC 19089 / CIP 103742 / CB 15</strain>
    </source>
</reference>
<proteinExistence type="inferred from homology"/>
<evidence type="ECO:0000255" key="1">
    <source>
        <dbReference type="HAMAP-Rule" id="MF_00743"/>
    </source>
</evidence>
<comment type="function">
    <text evidence="1">Involved in the TCA cycle. Catalyzes the stereospecific interconversion of fumarate to L-malate.</text>
</comment>
<comment type="catalytic activity">
    <reaction evidence="1">
        <text>(S)-malate = fumarate + H2O</text>
        <dbReference type="Rhea" id="RHEA:12460"/>
        <dbReference type="ChEBI" id="CHEBI:15377"/>
        <dbReference type="ChEBI" id="CHEBI:15589"/>
        <dbReference type="ChEBI" id="CHEBI:29806"/>
        <dbReference type="EC" id="4.2.1.2"/>
    </reaction>
</comment>
<comment type="pathway">
    <text evidence="1">Carbohydrate metabolism; tricarboxylic acid cycle; (S)-malate from fumarate: step 1/1.</text>
</comment>
<comment type="subunit">
    <text evidence="1">Homotetramer.</text>
</comment>
<comment type="subcellular location">
    <subcellularLocation>
        <location evidence="1">Cytoplasm</location>
    </subcellularLocation>
</comment>
<comment type="miscellaneous">
    <text evidence="1">There are 2 substrate-binding sites: the catalytic A site, and the non-catalytic B site that may play a role in the transfer of substrate or product between the active site and the solvent. Alternatively, the B site may bind allosteric effectors.</text>
</comment>
<comment type="similarity">
    <text evidence="1">Belongs to the class-II fumarase/aspartase family. Fumarase subfamily.</text>
</comment>